<comment type="function">
    <text evidence="2 8 9 10 12">Transcription factor. Interacts specifically with the W box (5'-(T)TGAC[CT]-3'), a frequently occurring elicitor-responsive cis-acting element. Also acts as a disease resistance protein involved in resistance to fungal and bacterial pathogens, including R.solanacearum, P.syringae pv. tomato and C.higginsianum. In presence of RPS4, elicites an EDS1-dependent hypersensitive response (PubMed:24146667).</text>
</comment>
<comment type="subunit">
    <text evidence="1">Interacts with PopP2, a R.solanacearum type III effector.</text>
</comment>
<comment type="subcellular location">
    <subcellularLocation>
        <location evidence="5">Nucleus</location>
    </subcellularLocation>
</comment>
<comment type="disruption phenotype">
    <text evidence="9">Loss of resistance to C.higginsianum.</text>
</comment>
<comment type="miscellaneous">
    <text evidence="8">Ecotypes susceptible to C.higginsianum or R.solanacearum, such as cv. Columbia, contain a protein with a premature stop codon while the longer allele found in cv. Nd-1, cv. Wassilewskija or cv. RLD confers resistance.</text>
</comment>
<feature type="chain" id="PRO_0000431361" description="Disease resistance protein RRS1">
    <location>
        <begin position="1"/>
        <end position="1373"/>
    </location>
</feature>
<feature type="domain" description="TIR" evidence="4">
    <location>
        <begin position="5"/>
        <end position="146"/>
    </location>
</feature>
<feature type="domain" description="NB-ARC" evidence="3">
    <location>
        <begin position="170"/>
        <end position="421"/>
    </location>
</feature>
<feature type="repeat" description="LRR 1" evidence="3">
    <location>
        <begin position="498"/>
        <end position="522"/>
    </location>
</feature>
<feature type="repeat" description="LRR 2" evidence="3">
    <location>
        <begin position="535"/>
        <end position="553"/>
    </location>
</feature>
<feature type="repeat" description="LRR 3" evidence="3">
    <location>
        <begin position="554"/>
        <end position="575"/>
    </location>
</feature>
<feature type="repeat" description="LRR 4" evidence="3">
    <location>
        <begin position="577"/>
        <end position="598"/>
    </location>
</feature>
<feature type="repeat" description="LRR 5" evidence="3">
    <location>
        <begin position="621"/>
        <end position="646"/>
    </location>
</feature>
<feature type="repeat" description="LRR 6" evidence="3">
    <location>
        <begin position="665"/>
        <end position="688"/>
    </location>
</feature>
<feature type="repeat" description="LRR 7" evidence="3">
    <location>
        <begin position="742"/>
        <end position="766"/>
    </location>
</feature>
<feature type="repeat" description="LRR 8" evidence="3">
    <location>
        <begin position="768"/>
        <end position="793"/>
    </location>
</feature>
<feature type="repeat" description="LRR 9" evidence="3">
    <location>
        <begin position="831"/>
        <end position="854"/>
    </location>
</feature>
<feature type="DNA-binding region" description="WRKY" evidence="5">
    <location>
        <begin position="1204"/>
        <end position="1272"/>
    </location>
</feature>
<feature type="region of interest" description="Disordered" evidence="7">
    <location>
        <begin position="1300"/>
        <end position="1323"/>
    </location>
</feature>
<feature type="short sequence motif" description="Nuclear localization signal" evidence="3">
    <location>
        <begin position="988"/>
        <end position="1005"/>
    </location>
</feature>
<feature type="binding site" evidence="6">
    <location>
        <begin position="179"/>
        <end position="186"/>
    </location>
    <ligand>
        <name>ATP</name>
        <dbReference type="ChEBI" id="CHEBI:30616"/>
    </ligand>
</feature>
<feature type="strand" evidence="14">
    <location>
        <begin position="1198"/>
        <end position="1201"/>
    </location>
</feature>
<feature type="strand" evidence="14">
    <location>
        <begin position="1215"/>
        <end position="1221"/>
    </location>
</feature>
<feature type="strand" evidence="14">
    <location>
        <begin position="1230"/>
        <end position="1235"/>
    </location>
</feature>
<feature type="helix" evidence="14">
    <location>
        <begin position="1238"/>
        <end position="1241"/>
    </location>
</feature>
<feature type="strand" evidence="14">
    <location>
        <begin position="1246"/>
        <end position="1251"/>
    </location>
</feature>
<feature type="strand" evidence="15">
    <location>
        <begin position="1253"/>
        <end position="1257"/>
    </location>
</feature>
<feature type="strand" evidence="14">
    <location>
        <begin position="1259"/>
        <end position="1265"/>
    </location>
</feature>
<reference key="1">
    <citation type="journal article" date="2009" name="Plant J.">
        <title>RRS1 and RPS4 provide a dual Resistance-gene system against fungal and bacterial pathogens.</title>
        <authorList>
            <person name="Narusaka M."/>
            <person name="Shirasu K."/>
            <person name="Noutoshi Y."/>
            <person name="Kubo Y."/>
            <person name="Shiraishi T."/>
            <person name="Iwabuchi M."/>
            <person name="Narusaka Y."/>
        </authorList>
    </citation>
    <scope>NUCLEOTIDE SEQUENCE [MRNA]</scope>
    <scope>FUNCTION</scope>
    <source>
        <strain>cv. Wassilewskija</strain>
    </source>
</reference>
<reference key="2">
    <citation type="journal article" date="2009" name="Plant Signal. Behav.">
        <title>A dual resistance gene system prevents infection by three distinct pathogens.</title>
        <authorList>
            <person name="Narusaka M."/>
            <person name="Kubo Y."/>
            <person name="Shiraishi T."/>
            <person name="Iwabuchi M."/>
            <person name="Narusaka Y."/>
        </authorList>
    </citation>
    <scope>FUNCTION</scope>
    <scope>DISRUPTION PHENOTYPE</scope>
</reference>
<reference key="3">
    <citation type="journal article" date="2013" name="Front. Plant Sci.">
        <title>Arabidopsis TNL-WRKY domain receptor RRS1 contributes to temperature-conditioned RPS4 auto-immunity.</title>
        <authorList>
            <person name="Heidrich K."/>
            <person name="Tsuda K."/>
            <person name="Blanvillain-Baufume S."/>
            <person name="Wirthmueller L."/>
            <person name="Bautor J."/>
            <person name="Parker J.E."/>
        </authorList>
    </citation>
    <scope>FUNCTION</scope>
    <source>
        <strain>cv. Columbia</strain>
        <strain>cv. Wassilewskija</strain>
    </source>
</reference>
<keyword id="KW-0002">3D-structure</keyword>
<keyword id="KW-0067">ATP-binding</keyword>
<keyword id="KW-0238">DNA-binding</keyword>
<keyword id="KW-0433">Leucine-rich repeat</keyword>
<keyword id="KW-0547">Nucleotide-binding</keyword>
<keyword id="KW-0539">Nucleus</keyword>
<keyword id="KW-0611">Plant defense</keyword>
<keyword id="KW-0677">Repeat</keyword>
<keyword id="KW-0804">Transcription</keyword>
<keyword id="KW-0805">Transcription regulation</keyword>
<dbReference type="EMBL" id="AB470471">
    <property type="protein sequence ID" value="BAH59424.1"/>
    <property type="molecule type" value="mRNA"/>
</dbReference>
<dbReference type="PDB" id="5W3X">
    <property type="method" value="X-ray"/>
    <property type="resolution" value="2.00 A"/>
    <property type="chains" value="B/D=1195-1273"/>
</dbReference>
<dbReference type="PDB" id="7P8K">
    <property type="method" value="X-ray"/>
    <property type="resolution" value="2.65 A"/>
    <property type="chains" value="B=1195-1273"/>
</dbReference>
<dbReference type="PDBsum" id="5W3X"/>
<dbReference type="PDBsum" id="7P8K"/>
<dbReference type="SMR" id="C4B7M5"/>
<dbReference type="ExpressionAtlas" id="C4B7M5">
    <property type="expression patterns" value="baseline and differential"/>
</dbReference>
<dbReference type="GO" id="GO:0005634">
    <property type="term" value="C:nucleus"/>
    <property type="evidence" value="ECO:0007669"/>
    <property type="project" value="UniProtKB-SubCell"/>
</dbReference>
<dbReference type="GO" id="GO:0043531">
    <property type="term" value="F:ADP binding"/>
    <property type="evidence" value="ECO:0007669"/>
    <property type="project" value="InterPro"/>
</dbReference>
<dbReference type="GO" id="GO:0005524">
    <property type="term" value="F:ATP binding"/>
    <property type="evidence" value="ECO:0007669"/>
    <property type="project" value="UniProtKB-KW"/>
</dbReference>
<dbReference type="GO" id="GO:0003700">
    <property type="term" value="F:DNA-binding transcription factor activity"/>
    <property type="evidence" value="ECO:0007669"/>
    <property type="project" value="InterPro"/>
</dbReference>
<dbReference type="GO" id="GO:0043565">
    <property type="term" value="F:sequence-specific DNA binding"/>
    <property type="evidence" value="ECO:0007669"/>
    <property type="project" value="InterPro"/>
</dbReference>
<dbReference type="GO" id="GO:0006952">
    <property type="term" value="P:defense response"/>
    <property type="evidence" value="ECO:0007669"/>
    <property type="project" value="UniProtKB-KW"/>
</dbReference>
<dbReference type="GO" id="GO:0007165">
    <property type="term" value="P:signal transduction"/>
    <property type="evidence" value="ECO:0007669"/>
    <property type="project" value="InterPro"/>
</dbReference>
<dbReference type="FunFam" id="1.10.8.430:FF:000004">
    <property type="entry name" value="Disease resistance protein (TIR-NBS-LRR class)"/>
    <property type="match status" value="1"/>
</dbReference>
<dbReference type="FunFam" id="3.40.50.10140:FF:000025">
    <property type="entry name" value="Disease resistance protein (TIR-NBS-LRR class)"/>
    <property type="match status" value="1"/>
</dbReference>
<dbReference type="FunFam" id="3.40.50.300:FF:001957">
    <property type="entry name" value="Disease resistance protein (TIR-NBS-LRR class)"/>
    <property type="match status" value="1"/>
</dbReference>
<dbReference type="FunFam" id="3.80.10.10:FF:001177">
    <property type="entry name" value="Disease resistance protein RRS1"/>
    <property type="match status" value="1"/>
</dbReference>
<dbReference type="Gene3D" id="1.10.8.430">
    <property type="entry name" value="Helical domain of apoptotic protease-activating factors"/>
    <property type="match status" value="1"/>
</dbReference>
<dbReference type="Gene3D" id="3.40.50.300">
    <property type="entry name" value="P-loop containing nucleotide triphosphate hydrolases"/>
    <property type="match status" value="1"/>
</dbReference>
<dbReference type="Gene3D" id="3.80.10.10">
    <property type="entry name" value="Ribonuclease Inhibitor"/>
    <property type="match status" value="2"/>
</dbReference>
<dbReference type="Gene3D" id="3.40.50.10140">
    <property type="entry name" value="Toll/interleukin-1 receptor homology (TIR) domain"/>
    <property type="match status" value="1"/>
</dbReference>
<dbReference type="Gene3D" id="2.20.25.80">
    <property type="entry name" value="WRKY domain"/>
    <property type="match status" value="1"/>
</dbReference>
<dbReference type="InterPro" id="IPR042197">
    <property type="entry name" value="Apaf_helical"/>
</dbReference>
<dbReference type="InterPro" id="IPR044974">
    <property type="entry name" value="Disease_R_plants"/>
</dbReference>
<dbReference type="InterPro" id="IPR011713">
    <property type="entry name" value="Leu-rich_rpt_3"/>
</dbReference>
<dbReference type="InterPro" id="IPR032675">
    <property type="entry name" value="LRR_dom_sf"/>
</dbReference>
<dbReference type="InterPro" id="IPR002182">
    <property type="entry name" value="NB-ARC"/>
</dbReference>
<dbReference type="InterPro" id="IPR027417">
    <property type="entry name" value="P-loop_NTPase"/>
</dbReference>
<dbReference type="InterPro" id="IPR000157">
    <property type="entry name" value="TIR_dom"/>
</dbReference>
<dbReference type="InterPro" id="IPR035897">
    <property type="entry name" value="Toll_tir_struct_dom_sf"/>
</dbReference>
<dbReference type="InterPro" id="IPR036390">
    <property type="entry name" value="WH_DNA-bd_sf"/>
</dbReference>
<dbReference type="InterPro" id="IPR003657">
    <property type="entry name" value="WRKY_dom"/>
</dbReference>
<dbReference type="InterPro" id="IPR036576">
    <property type="entry name" value="WRKY_dom_sf"/>
</dbReference>
<dbReference type="PANTHER" id="PTHR11017:SF569">
    <property type="entry name" value="DISEASE RESISTANCE PROTEIN"/>
    <property type="match status" value="1"/>
</dbReference>
<dbReference type="PANTHER" id="PTHR11017">
    <property type="entry name" value="LEUCINE-RICH REPEAT-CONTAINING PROTEIN"/>
    <property type="match status" value="1"/>
</dbReference>
<dbReference type="Pfam" id="PF07725">
    <property type="entry name" value="LRR_3"/>
    <property type="match status" value="1"/>
</dbReference>
<dbReference type="Pfam" id="PF00931">
    <property type="entry name" value="NB-ARC"/>
    <property type="match status" value="1"/>
</dbReference>
<dbReference type="Pfam" id="PF23282">
    <property type="entry name" value="WHD_ROQ1"/>
    <property type="match status" value="2"/>
</dbReference>
<dbReference type="Pfam" id="PF03106">
    <property type="entry name" value="WRKY"/>
    <property type="match status" value="1"/>
</dbReference>
<dbReference type="PRINTS" id="PR00364">
    <property type="entry name" value="DISEASERSIST"/>
</dbReference>
<dbReference type="SMART" id="SM00774">
    <property type="entry name" value="WRKY"/>
    <property type="match status" value="1"/>
</dbReference>
<dbReference type="SUPFAM" id="SSF52058">
    <property type="entry name" value="L domain-like"/>
    <property type="match status" value="1"/>
</dbReference>
<dbReference type="SUPFAM" id="SSF52540">
    <property type="entry name" value="P-loop containing nucleoside triphosphate hydrolases"/>
    <property type="match status" value="1"/>
</dbReference>
<dbReference type="SUPFAM" id="SSF52200">
    <property type="entry name" value="Toll/Interleukin receptor TIR domain"/>
    <property type="match status" value="1"/>
</dbReference>
<dbReference type="SUPFAM" id="SSF46785">
    <property type="entry name" value="Winged helix' DNA-binding domain"/>
    <property type="match status" value="1"/>
</dbReference>
<dbReference type="SUPFAM" id="SSF118290">
    <property type="entry name" value="WRKY DNA-binding domain"/>
    <property type="match status" value="1"/>
</dbReference>
<dbReference type="PROSITE" id="PS50104">
    <property type="entry name" value="TIR"/>
    <property type="match status" value="1"/>
</dbReference>
<dbReference type="PROSITE" id="PS50811">
    <property type="entry name" value="WRKY"/>
    <property type="match status" value="1"/>
</dbReference>
<protein>
    <recommendedName>
        <fullName evidence="11">Disease resistance protein RRS1</fullName>
    </recommendedName>
    <alternativeName>
        <fullName evidence="11">Disease resistance protein RCH2</fullName>
    </alternativeName>
    <alternativeName>
        <fullName>Probable WRKY transcription factor 52</fullName>
    </alternativeName>
    <alternativeName>
        <fullName evidence="11">Resistance to Colletotrichum higginsianum 2 protein</fullName>
    </alternativeName>
    <alternativeName>
        <fullName evidence="11">Resistance to Ralstonia solanacearum 1 protein</fullName>
    </alternativeName>
</protein>
<accession>C4B7M5</accession>
<sequence length="1373" mass="155399">MTNCEKDEEFVCISCVEEVRYSFVSHLSEALRRKGINNVVVGVDSDDLLFKESQAKIEKAGVSVMVLPGNCDPSDVWLDKFAKVLECQRNNKDQAVVPVLYGDSLLRDQWLSELDFKGLSRIHQSRKECSDSILVEEIVRDVYETHFYVGRIGIYSKLLEIENMVNKQPIGIRCVGIWGMPGIGKTTLAKAVFDQMSSAFDASCFIEDYDKSIHEKGLYCLLEEQLLPGNDATIMKLSSLRDRLNSKRVLVVLDDVRNALVGESFLEGFDWLGPGSLIIITSRDKQVFCLCGINQIYEVQGLNEKEARQLFLLSASIKEDMGEQNLQELSVRVINYANGNPLAINVYGRELKGKKKLSEMETAFLKLKRRPPFKIVDAFKSTYDTLSDNEKNIFLDIACFFQGENVNYVIQLLEGCGFFPHVEIDVLVDKCLVTISENRVWLHKLTQDIGREIINGETVQIERRRRLWEPWSIKYLLEYNEHKANGEPKTTFKRAQGSEEIEGLFLDTSNLRFDLQPSAFKNMLNLRLLKIYCSNPEVHPVINFPTGSLHSLPNELRLLHWENYPLKSLPQNFDPRHLVEINMPYSQLQKLWGGTKNLEMLRTIRLCHSHHLVDIDDLLKAENLEVIDLQGCTRLQNFPAAGRLLRLRDVNLSGCIKIKSVLEIPPNIEKLHLQGTGILALPVSTVKPNHRELVNFLTEIPGLSEASKLERLTSLLESNSSCQDLGKLICLELKDCSCLQSLPNMANLDLNVLDLSGCSSLNSIQGFPRFLKQLYLGGTAIREVPQLPQSLEILNAHGSCLRSLPNMANLEFLKVLDLSGCSELETIQGFPRNLKELYFAGTTLREVPQLPLSLEVLNAHGSDSEKLPMHYKFNNFFDLSQQVVNDFFLKTLTYVKHIPRGYTQELINKAPTFSFSAPSHTNQNATFDLQPGSSVMTRLNHSWRNTLVGFGMLVEVAFPEDYCDATDFGISCVCRWSNKEGRSCRIERNFHCWAPGKVVPKVRKDHTFVFSDVNMRPSTGEGNDPDIWAGLVVFEFFPINQQTKCLNDRFTVTRCGVRVINVATGNTSLENISLVLSLDPVEVSGYEVLRVSYDDLQEMDKVLFLYIASLFNDEDVDFVAPLIAGIDLDVSSGLKVLADVSLISVSSNGEIVMHSLQRQMGKEILHGQSMLLSDCESSMTENLSDVPKKEKKHRESKVKKVVSIPAIDEGDLWTWRKYGQKDILGSRFPRGYYRCAYKFTHGCKATKQVQRSETDSNMLAITYLSEHNHPRPTKRKALADSTRSTSSSICSAITTSASSRVFQNKDEPNKPHLPSSSTPPGNAAVLFKMTDMEEFQDNMEVDNDVVDTRTLALFPEFQHQPEEEYPWSTFFDY</sequence>
<name>WR52W_ARATH</name>
<organism evidence="13">
    <name type="scientific">Arabidopsis thaliana</name>
    <name type="common">Mouse-ear cress</name>
    <dbReference type="NCBI Taxonomy" id="3702"/>
    <lineage>
        <taxon>Eukaryota</taxon>
        <taxon>Viridiplantae</taxon>
        <taxon>Streptophyta</taxon>
        <taxon>Embryophyta</taxon>
        <taxon>Tracheophyta</taxon>
        <taxon>Spermatophyta</taxon>
        <taxon>Magnoliopsida</taxon>
        <taxon>eudicotyledons</taxon>
        <taxon>Gunneridae</taxon>
        <taxon>Pentapetalae</taxon>
        <taxon>rosids</taxon>
        <taxon>malvids</taxon>
        <taxon>Brassicales</taxon>
        <taxon>Brassicaceae</taxon>
        <taxon>Camelineae</taxon>
        <taxon>Arabidopsis</taxon>
    </lineage>
</organism>
<evidence type="ECO:0000250" key="1">
    <source>
        <dbReference type="UniProtKB" id="P0DKH5"/>
    </source>
</evidence>
<evidence type="ECO:0000250" key="2">
    <source>
        <dbReference type="UniProtKB" id="Q9FH83"/>
    </source>
</evidence>
<evidence type="ECO:0000255" key="3"/>
<evidence type="ECO:0000255" key="4">
    <source>
        <dbReference type="PROSITE-ProRule" id="PRU00204"/>
    </source>
</evidence>
<evidence type="ECO:0000255" key="5">
    <source>
        <dbReference type="PROSITE-ProRule" id="PRU00223"/>
    </source>
</evidence>
<evidence type="ECO:0000255" key="6">
    <source>
        <dbReference type="PROSITE-ProRule" id="PRU00499"/>
    </source>
</evidence>
<evidence type="ECO:0000256" key="7">
    <source>
        <dbReference type="SAM" id="MobiDB-lite"/>
    </source>
</evidence>
<evidence type="ECO:0000269" key="8">
    <source>
    </source>
</evidence>
<evidence type="ECO:0000269" key="9">
    <source>
    </source>
</evidence>
<evidence type="ECO:0000269" key="10">
    <source>
    </source>
</evidence>
<evidence type="ECO:0000303" key="11">
    <source>
    </source>
</evidence>
<evidence type="ECO:0000305" key="12"/>
<evidence type="ECO:0000312" key="13">
    <source>
        <dbReference type="EMBL" id="BAH59424.1"/>
    </source>
</evidence>
<evidence type="ECO:0007829" key="14">
    <source>
        <dbReference type="PDB" id="5W3X"/>
    </source>
</evidence>
<evidence type="ECO:0007829" key="15">
    <source>
        <dbReference type="PDB" id="7P8K"/>
    </source>
</evidence>
<proteinExistence type="evidence at protein level"/>
<gene>
    <name evidence="11" type="primary">RRS1</name>
    <name evidence="11" type="synonym">RCH2</name>
    <name type="synonym">RRS1-R</name>
    <name type="synonym">WRKY52</name>
</gene>